<reference key="1">
    <citation type="submission" date="1999-12" db="EMBL/GenBank/DDBJ databases">
        <authorList>
            <person name="Ishibashi M."/>
            <person name="Hiratsuka K."/>
            <person name="Yonezawa Y."/>
            <person name="Tokunaga H."/>
            <person name="Tokunaga M."/>
        </authorList>
    </citation>
    <scope>NUCLEOTIDE SEQUENCE [GENOMIC DNA]</scope>
</reference>
<reference key="2">
    <citation type="journal article" date="2000" name="Proc. Natl. Acad. Sci. U.S.A.">
        <title>Genome sequence of Halobacterium species NRC-1.</title>
        <authorList>
            <person name="Ng W.V."/>
            <person name="Kennedy S.P."/>
            <person name="Mahairas G.G."/>
            <person name="Berquist B."/>
            <person name="Pan M."/>
            <person name="Shukla H.D."/>
            <person name="Lasky S.R."/>
            <person name="Baliga N.S."/>
            <person name="Thorsson V."/>
            <person name="Sbrogna J."/>
            <person name="Swartzell S."/>
            <person name="Weir D."/>
            <person name="Hall J."/>
            <person name="Dahl T.A."/>
            <person name="Welti R."/>
            <person name="Goo Y.A."/>
            <person name="Leithauser B."/>
            <person name="Keller K."/>
            <person name="Cruz R."/>
            <person name="Danson M.J."/>
            <person name="Hough D.W."/>
            <person name="Maddocks D.G."/>
            <person name="Jablonski P.E."/>
            <person name="Krebs M.P."/>
            <person name="Angevine C.M."/>
            <person name="Dale H."/>
            <person name="Isenbarger T.A."/>
            <person name="Peck R.F."/>
            <person name="Pohlschroder M."/>
            <person name="Spudich J.L."/>
            <person name="Jung K.-H."/>
            <person name="Alam M."/>
            <person name="Freitas T."/>
            <person name="Hou S."/>
            <person name="Daniels C.J."/>
            <person name="Dennis P.P."/>
            <person name="Omer A.D."/>
            <person name="Ebhardt H."/>
            <person name="Lowe T.M."/>
            <person name="Liang P."/>
            <person name="Riley M."/>
            <person name="Hood L."/>
            <person name="DasSarma S."/>
        </authorList>
    </citation>
    <scope>NUCLEOTIDE SEQUENCE [LARGE SCALE GENOMIC DNA]</scope>
    <source>
        <strain>ATCC 700922 / JCM 11081 / NRC-1</strain>
    </source>
</reference>
<dbReference type="EMBL" id="AB036344">
    <property type="protein sequence ID" value="BAB17306.1"/>
    <property type="molecule type" value="Genomic_DNA"/>
</dbReference>
<dbReference type="EMBL" id="AE004437">
    <property type="protein sequence ID" value="AAG19538.1"/>
    <property type="status" value="ALT_INIT"/>
    <property type="molecule type" value="Genomic_DNA"/>
</dbReference>
<dbReference type="PIR" id="F84271">
    <property type="entry name" value="F84271"/>
</dbReference>
<dbReference type="RefSeq" id="WP_010902833.1">
    <property type="nucleotide sequence ID" value="NC_002607.1"/>
</dbReference>
<dbReference type="SMR" id="P57710"/>
<dbReference type="FunCoup" id="P57710">
    <property type="interactions" value="129"/>
</dbReference>
<dbReference type="STRING" id="64091.VNG_1158G"/>
<dbReference type="PaxDb" id="64091-VNG_1158G"/>
<dbReference type="KEGG" id="hal:VNG_1158G"/>
<dbReference type="PATRIC" id="fig|64091.14.peg.885"/>
<dbReference type="HOGENOM" id="CLU_3178505_0_0_2"/>
<dbReference type="InParanoid" id="P57710"/>
<dbReference type="OrthoDB" id="7620at2157"/>
<dbReference type="PhylomeDB" id="P57710"/>
<dbReference type="Proteomes" id="UP000000554">
    <property type="component" value="Chromosome"/>
</dbReference>
<dbReference type="GO" id="GO:0022627">
    <property type="term" value="C:cytosolic small ribosomal subunit"/>
    <property type="evidence" value="ECO:0000318"/>
    <property type="project" value="GO_Central"/>
</dbReference>
<dbReference type="GO" id="GO:0003735">
    <property type="term" value="F:structural constituent of ribosome"/>
    <property type="evidence" value="ECO:0000318"/>
    <property type="project" value="GO_Central"/>
</dbReference>
<dbReference type="GO" id="GO:0030490">
    <property type="term" value="P:maturation of SSU-rRNA"/>
    <property type="evidence" value="ECO:0000318"/>
    <property type="project" value="GO_Central"/>
</dbReference>
<dbReference type="GO" id="GO:0000028">
    <property type="term" value="P:ribosomal small subunit assembly"/>
    <property type="evidence" value="ECO:0000318"/>
    <property type="project" value="GO_Central"/>
</dbReference>
<dbReference type="GO" id="GO:0006412">
    <property type="term" value="P:translation"/>
    <property type="evidence" value="ECO:0007669"/>
    <property type="project" value="UniProtKB-UniRule"/>
</dbReference>
<dbReference type="CDD" id="cd04457">
    <property type="entry name" value="S1_S28E"/>
    <property type="match status" value="1"/>
</dbReference>
<dbReference type="FunFam" id="2.40.50.140:FF:000145">
    <property type="entry name" value="30S ribosomal protein S28e"/>
    <property type="match status" value="1"/>
</dbReference>
<dbReference type="Gene3D" id="2.40.50.140">
    <property type="entry name" value="Nucleic acid-binding proteins"/>
    <property type="match status" value="1"/>
</dbReference>
<dbReference type="HAMAP" id="MF_00292">
    <property type="entry name" value="Ribosomal_eS28"/>
    <property type="match status" value="1"/>
</dbReference>
<dbReference type="InterPro" id="IPR012340">
    <property type="entry name" value="NA-bd_OB-fold"/>
</dbReference>
<dbReference type="InterPro" id="IPR000289">
    <property type="entry name" value="Ribosomal_eS28"/>
</dbReference>
<dbReference type="NCBIfam" id="NF003080">
    <property type="entry name" value="PRK04007.1"/>
    <property type="match status" value="1"/>
</dbReference>
<dbReference type="PANTHER" id="PTHR10769">
    <property type="entry name" value="40S RIBOSOMAL PROTEIN S28"/>
    <property type="match status" value="1"/>
</dbReference>
<dbReference type="PANTHER" id="PTHR10769:SF3">
    <property type="entry name" value="SMALL RIBOSOMAL SUBUNIT PROTEIN ES28"/>
    <property type="match status" value="1"/>
</dbReference>
<dbReference type="Pfam" id="PF01200">
    <property type="entry name" value="Ribosomal_S28e"/>
    <property type="match status" value="1"/>
</dbReference>
<dbReference type="SUPFAM" id="SSF50249">
    <property type="entry name" value="Nucleic acid-binding proteins"/>
    <property type="match status" value="1"/>
</dbReference>
<name>RS28_HALSA</name>
<proteinExistence type="inferred from homology"/>
<evidence type="ECO:0000305" key="1"/>
<comment type="similarity">
    <text evidence="1">Belongs to the eukaryotic ribosomal protein eS28 family.</text>
</comment>
<comment type="sequence caution" evidence="1">
    <conflict type="erroneous initiation">
        <sequence resource="EMBL-CDS" id="AAG19538"/>
    </conflict>
</comment>
<accession>P57710</accession>
<accession>Q9HQH7</accession>
<protein>
    <recommendedName>
        <fullName evidence="1">Small ribosomal subunit protein eS28</fullName>
    </recommendedName>
    <alternativeName>
        <fullName>30S ribosomal protein S28e</fullName>
    </alternativeName>
</protein>
<gene>
    <name type="primary">rps28e</name>
    <name type="ordered locus">VNG_1158G</name>
</gene>
<organism>
    <name type="scientific">Halobacterium salinarum (strain ATCC 700922 / JCM 11081 / NRC-1)</name>
    <name type="common">Halobacterium halobium</name>
    <dbReference type="NCBI Taxonomy" id="64091"/>
    <lineage>
        <taxon>Archaea</taxon>
        <taxon>Methanobacteriati</taxon>
        <taxon>Methanobacteriota</taxon>
        <taxon>Stenosarchaea group</taxon>
        <taxon>Halobacteria</taxon>
        <taxon>Halobacteriales</taxon>
        <taxon>Halobacteriaceae</taxon>
        <taxon>Halobacterium</taxon>
        <taxon>Halobacterium salinarum NRC-34001</taxon>
    </lineage>
</organism>
<keyword id="KW-1185">Reference proteome</keyword>
<keyword id="KW-0687">Ribonucleoprotein</keyword>
<keyword id="KW-0689">Ribosomal protein</keyword>
<feature type="chain" id="PRO_0000136846" description="Small ribosomal subunit protein eS28">
    <location>
        <begin position="1"/>
        <end position="74"/>
    </location>
</feature>
<sequence>MSAEESEEGATPAEVIEVVGKTGMHGEAMQVKCRIQEGGNQGRIITRNVLGPVRVGDVIQLKETAREADSIGGQ</sequence>